<organismHost>
    <name type="scientific">Homo sapiens</name>
    <name type="common">Human</name>
    <dbReference type="NCBI Taxonomy" id="9606"/>
</organismHost>
<proteinExistence type="inferred from homology"/>
<feature type="chain" id="PRO_0000115697" description="Alkaline nuclease">
    <location>
        <begin position="1"/>
        <end position="551"/>
    </location>
</feature>
<feature type="site" description="Required for function" evidence="1">
    <location>
        <position position="188"/>
    </location>
</feature>
<feature type="site" description="Required for function" evidence="1">
    <location>
        <position position="260"/>
    </location>
</feature>
<feature type="site" description="Required for function" evidence="1">
    <location>
        <position position="286"/>
    </location>
</feature>
<feature type="site" description="Required for function" evidence="1">
    <location>
        <position position="288"/>
    </location>
</feature>
<gene>
    <name type="ORF">ORF48</name>
</gene>
<sequence length="551" mass="61271">MARSGLDRIDISPQPAKKIARVGGLQHPFVKTDINTINVEHHFIDTLQKTSPNMDCRGMTAGIFIRLSHMYKILTTLESPNDVTYTTPGSTNALFFKTSTQPQEPRPEELASKLTQDDIKRILLTIESETRGQGDNAIWTLLRRNLITASTLKWSVSGPVIPPQWFYHHNTTDTYGDAAAMAFGKTNEPAARAIVEALFIDPADIRTPDHLTPEATTKFFNFDMLNTKSPSLLVGTPRIGTYECGLLIDVRTGLIGASLDVLVCDRDPLTGTLNPHPAETDISFFEIKCRAKYLFDPDDKNNPLGRTYTTLINRPTMANLRDFLYTIKNPCVSFFGPSANPSTREALITDHVEWKRLGFKGGRALTELDAHHLGLNRTISSRVWVFNDPDIQKGTITTIAWATGDTALQIPVFANPRHANFKQIAVQTYVLSGYFPALKLRPFLVTFIGRVRRPHEVGVPLRVDTQAAAIYEYNWPTIPPHCAVPVIAVLTPIEVDVPRVTQILKDTGNNAITSALRSLRWDNLHPAVEEESVDCANGTTSLLRATEKPLL</sequence>
<keyword id="KW-0255">Endonuclease</keyword>
<keyword id="KW-0269">Exonuclease</keyword>
<keyword id="KW-1035">Host cytoplasm</keyword>
<keyword id="KW-1048">Host nucleus</keyword>
<keyword id="KW-0945">Host-virus interaction</keyword>
<keyword id="KW-0378">Hydrolase</keyword>
<keyword id="KW-0540">Nuclease</keyword>
<keyword id="KW-1185">Reference proteome</keyword>
<evidence type="ECO:0000255" key="1">
    <source>
        <dbReference type="HAMAP-Rule" id="MF_04009"/>
    </source>
</evidence>
<protein>
    <recommendedName>
        <fullName evidence="1">Alkaline nuclease</fullName>
        <ecNumber evidence="1">3.1.-.-</ecNumber>
    </recommendedName>
</protein>
<organism>
    <name type="scientific">Varicella-zoster virus (strain Dumas)</name>
    <name type="common">HHV-3</name>
    <name type="synonym">Human herpesvirus 3</name>
    <dbReference type="NCBI Taxonomy" id="10338"/>
    <lineage>
        <taxon>Viruses</taxon>
        <taxon>Duplodnaviria</taxon>
        <taxon>Heunggongvirae</taxon>
        <taxon>Peploviricota</taxon>
        <taxon>Herviviricetes</taxon>
        <taxon>Herpesvirales</taxon>
        <taxon>Orthoherpesviridae</taxon>
        <taxon>Alphaherpesvirinae</taxon>
        <taxon>Varicellovirus</taxon>
        <taxon>Varicellovirus humanalpha3</taxon>
        <taxon>Human herpesvirus 3</taxon>
    </lineage>
</organism>
<dbReference type="EC" id="3.1.-.-" evidence="1"/>
<dbReference type="EMBL" id="X04370">
    <property type="protein sequence ID" value="CAA27931.1"/>
    <property type="molecule type" value="Genomic_DNA"/>
</dbReference>
<dbReference type="PIR" id="D27344">
    <property type="entry name" value="NDBE48"/>
</dbReference>
<dbReference type="SMR" id="P09253"/>
<dbReference type="Proteomes" id="UP000002602">
    <property type="component" value="Genome"/>
</dbReference>
<dbReference type="GO" id="GO:0030430">
    <property type="term" value="C:host cell cytoplasm"/>
    <property type="evidence" value="ECO:0007669"/>
    <property type="project" value="UniProtKB-SubCell"/>
</dbReference>
<dbReference type="GO" id="GO:0042025">
    <property type="term" value="C:host cell nucleus"/>
    <property type="evidence" value="ECO:0007669"/>
    <property type="project" value="UniProtKB-SubCell"/>
</dbReference>
<dbReference type="GO" id="GO:0003677">
    <property type="term" value="F:DNA binding"/>
    <property type="evidence" value="ECO:0007669"/>
    <property type="project" value="InterPro"/>
</dbReference>
<dbReference type="GO" id="GO:0004519">
    <property type="term" value="F:endonuclease activity"/>
    <property type="evidence" value="ECO:0007669"/>
    <property type="project" value="UniProtKB-KW"/>
</dbReference>
<dbReference type="GO" id="GO:0004527">
    <property type="term" value="F:exonuclease activity"/>
    <property type="evidence" value="ECO:0007669"/>
    <property type="project" value="UniProtKB-KW"/>
</dbReference>
<dbReference type="Gene3D" id="3.90.320.10">
    <property type="match status" value="1"/>
</dbReference>
<dbReference type="HAMAP" id="MF_04009">
    <property type="entry name" value="HSV_AN"/>
    <property type="match status" value="1"/>
</dbReference>
<dbReference type="InterPro" id="IPR001616">
    <property type="entry name" value="Herpes_alk_exo"/>
</dbReference>
<dbReference type="InterPro" id="IPR011604">
    <property type="entry name" value="PDDEXK-like_dom_sf"/>
</dbReference>
<dbReference type="InterPro" id="IPR011335">
    <property type="entry name" value="Restrct_endonuc-II-like"/>
</dbReference>
<dbReference type="InterPro" id="IPR034720">
    <property type="entry name" value="Viral_alk_exo"/>
</dbReference>
<dbReference type="Pfam" id="PF01771">
    <property type="entry name" value="Viral_alk_exo"/>
    <property type="match status" value="1"/>
</dbReference>
<dbReference type="PRINTS" id="PR00924">
    <property type="entry name" value="ALKEXNUCLASE"/>
</dbReference>
<dbReference type="SUPFAM" id="SSF52980">
    <property type="entry name" value="Restriction endonuclease-like"/>
    <property type="match status" value="1"/>
</dbReference>
<name>AN_VZVD</name>
<accession>P09253</accession>
<reference key="1">
    <citation type="journal article" date="1986" name="J. Gen. Virol.">
        <title>The complete DNA sequence of varicella-zoster virus.</title>
        <authorList>
            <person name="Davison A.J."/>
            <person name="Scott J.E."/>
        </authorList>
    </citation>
    <scope>NUCLEOTIDE SEQUENCE [LARGE SCALE GENOMIC DNA]</scope>
</reference>
<comment type="function">
    <text evidence="1">Plays a role in processing non linear or branched viral DNA intermediates in order to promote the production of mature packaged unit-length linear progeny viral DNA molecules. Exhibits endonuclease and exonuclease activities and accepts both double-stranded and single-stranded DNA as substrate. Exonuclease digestion of DNA is in the 5'-&gt; 3' direction and the products are 5'-monophosphate nucleosides. Additionally, forms a recombinase with the major DNA-binding protein, which displays strand exchange activity.</text>
</comment>
<comment type="subunit">
    <text evidence="1">Interacts with major DNA-binding protein; this interaction increases the nuclease processivity of the alkaline exonuclease.</text>
</comment>
<comment type="subcellular location">
    <subcellularLocation>
        <location evidence="1">Host nucleus</location>
    </subcellularLocation>
    <subcellularLocation>
        <location evidence="1">Host cytoplasm</location>
    </subcellularLocation>
</comment>
<comment type="similarity">
    <text evidence="1">Belongs to the herpesviridae alkaline nuclease family.</text>
</comment>